<accession>A7HSW4</accession>
<name>ASSY_PARL1</name>
<sequence>MSGATKDVKKVVLAYSGGLDTSVILKWLQETYGCEVVTFTADLGQGEELEPARKKAEMLGVKEIYIEDLREEFVRDFVFPMFRANAVYEGVYLLGTSIARPLIAKRQIEIARQTGADAVCHGSTGKGNDQVRFELGYAALNPEIKIIAPWREWDLTSRTKLIEFAEKHQIPIAKDKRGEAPFSVDANLLHISAEGKVLEDPADEAPEYVYSRSVRPEDAPDTPTYVEVGFEKGDAVSIDGVKMSPATLLTKLNELGGANGIGRLDLVENRFVGMKSRGVYETPGGTVLLVAHRAMESITLDRGAAHLKDELMPRYAELIYNGFWWSPEREMLQALIDKSQEMVTGSVRLKLYKGMATVVGRSSPYSLYSMAHVTFEEDAGAYDQKDAAGFIRLNALRLRLLAARNNRTKK</sequence>
<dbReference type="EC" id="6.3.4.5" evidence="1"/>
<dbReference type="EMBL" id="CP000774">
    <property type="protein sequence ID" value="ABS62997.1"/>
    <property type="molecule type" value="Genomic_DNA"/>
</dbReference>
<dbReference type="RefSeq" id="WP_012110272.1">
    <property type="nucleotide sequence ID" value="NC_009719.1"/>
</dbReference>
<dbReference type="SMR" id="A7HSW4"/>
<dbReference type="STRING" id="402881.Plav_1377"/>
<dbReference type="KEGG" id="pla:Plav_1377"/>
<dbReference type="eggNOG" id="COG0137">
    <property type="taxonomic scope" value="Bacteria"/>
</dbReference>
<dbReference type="HOGENOM" id="CLU_032784_4_2_5"/>
<dbReference type="OrthoDB" id="9801641at2"/>
<dbReference type="UniPathway" id="UPA00068">
    <property type="reaction ID" value="UER00113"/>
</dbReference>
<dbReference type="Proteomes" id="UP000006377">
    <property type="component" value="Chromosome"/>
</dbReference>
<dbReference type="GO" id="GO:0005737">
    <property type="term" value="C:cytoplasm"/>
    <property type="evidence" value="ECO:0007669"/>
    <property type="project" value="UniProtKB-SubCell"/>
</dbReference>
<dbReference type="GO" id="GO:0004055">
    <property type="term" value="F:argininosuccinate synthase activity"/>
    <property type="evidence" value="ECO:0007669"/>
    <property type="project" value="UniProtKB-UniRule"/>
</dbReference>
<dbReference type="GO" id="GO:0005524">
    <property type="term" value="F:ATP binding"/>
    <property type="evidence" value="ECO:0007669"/>
    <property type="project" value="UniProtKB-UniRule"/>
</dbReference>
<dbReference type="GO" id="GO:0000053">
    <property type="term" value="P:argininosuccinate metabolic process"/>
    <property type="evidence" value="ECO:0007669"/>
    <property type="project" value="TreeGrafter"/>
</dbReference>
<dbReference type="GO" id="GO:0006526">
    <property type="term" value="P:L-arginine biosynthetic process"/>
    <property type="evidence" value="ECO:0007669"/>
    <property type="project" value="UniProtKB-UniRule"/>
</dbReference>
<dbReference type="GO" id="GO:0000050">
    <property type="term" value="P:urea cycle"/>
    <property type="evidence" value="ECO:0007669"/>
    <property type="project" value="TreeGrafter"/>
</dbReference>
<dbReference type="CDD" id="cd01999">
    <property type="entry name" value="ASS"/>
    <property type="match status" value="1"/>
</dbReference>
<dbReference type="FunFam" id="3.40.50.620:FF:000019">
    <property type="entry name" value="Argininosuccinate synthase"/>
    <property type="match status" value="1"/>
</dbReference>
<dbReference type="FunFam" id="3.90.1260.10:FF:000007">
    <property type="entry name" value="Argininosuccinate synthase"/>
    <property type="match status" value="1"/>
</dbReference>
<dbReference type="Gene3D" id="3.90.1260.10">
    <property type="entry name" value="Argininosuccinate synthetase, chain A, domain 2"/>
    <property type="match status" value="1"/>
</dbReference>
<dbReference type="Gene3D" id="3.40.50.620">
    <property type="entry name" value="HUPs"/>
    <property type="match status" value="1"/>
</dbReference>
<dbReference type="Gene3D" id="1.20.5.470">
    <property type="entry name" value="Single helix bin"/>
    <property type="match status" value="1"/>
</dbReference>
<dbReference type="HAMAP" id="MF_00005">
    <property type="entry name" value="Arg_succ_synth_type1"/>
    <property type="match status" value="1"/>
</dbReference>
<dbReference type="InterPro" id="IPR048268">
    <property type="entry name" value="Arginosuc_syn_C"/>
</dbReference>
<dbReference type="InterPro" id="IPR048267">
    <property type="entry name" value="Arginosuc_syn_N"/>
</dbReference>
<dbReference type="InterPro" id="IPR001518">
    <property type="entry name" value="Arginosuc_synth"/>
</dbReference>
<dbReference type="InterPro" id="IPR018223">
    <property type="entry name" value="Arginosuc_synth_CS"/>
</dbReference>
<dbReference type="InterPro" id="IPR023434">
    <property type="entry name" value="Arginosuc_synth_type_1_subfam"/>
</dbReference>
<dbReference type="InterPro" id="IPR024074">
    <property type="entry name" value="AS_cat/multimer_dom_body"/>
</dbReference>
<dbReference type="InterPro" id="IPR014729">
    <property type="entry name" value="Rossmann-like_a/b/a_fold"/>
</dbReference>
<dbReference type="NCBIfam" id="TIGR00032">
    <property type="entry name" value="argG"/>
    <property type="match status" value="1"/>
</dbReference>
<dbReference type="NCBIfam" id="NF001770">
    <property type="entry name" value="PRK00509.1"/>
    <property type="match status" value="1"/>
</dbReference>
<dbReference type="PANTHER" id="PTHR11587">
    <property type="entry name" value="ARGININOSUCCINATE SYNTHASE"/>
    <property type="match status" value="1"/>
</dbReference>
<dbReference type="PANTHER" id="PTHR11587:SF2">
    <property type="entry name" value="ARGININOSUCCINATE SYNTHASE"/>
    <property type="match status" value="1"/>
</dbReference>
<dbReference type="Pfam" id="PF20979">
    <property type="entry name" value="Arginosuc_syn_C"/>
    <property type="match status" value="1"/>
</dbReference>
<dbReference type="Pfam" id="PF00764">
    <property type="entry name" value="Arginosuc_synth"/>
    <property type="match status" value="1"/>
</dbReference>
<dbReference type="SUPFAM" id="SSF52402">
    <property type="entry name" value="Adenine nucleotide alpha hydrolases-like"/>
    <property type="match status" value="1"/>
</dbReference>
<dbReference type="SUPFAM" id="SSF69864">
    <property type="entry name" value="Argininosuccinate synthetase, C-terminal domain"/>
    <property type="match status" value="1"/>
</dbReference>
<dbReference type="PROSITE" id="PS00564">
    <property type="entry name" value="ARGININOSUCCIN_SYN_1"/>
    <property type="match status" value="1"/>
</dbReference>
<dbReference type="PROSITE" id="PS00565">
    <property type="entry name" value="ARGININOSUCCIN_SYN_2"/>
    <property type="match status" value="1"/>
</dbReference>
<feature type="chain" id="PRO_0000321316" description="Argininosuccinate synthase">
    <location>
        <begin position="1"/>
        <end position="410"/>
    </location>
</feature>
<feature type="binding site" evidence="1">
    <location>
        <begin position="14"/>
        <end position="22"/>
    </location>
    <ligand>
        <name>ATP</name>
        <dbReference type="ChEBI" id="CHEBI:30616"/>
    </ligand>
</feature>
<feature type="binding site" evidence="1">
    <location>
        <position position="41"/>
    </location>
    <ligand>
        <name>ATP</name>
        <dbReference type="ChEBI" id="CHEBI:30616"/>
    </ligand>
</feature>
<feature type="binding site" evidence="1">
    <location>
        <position position="92"/>
    </location>
    <ligand>
        <name>L-citrulline</name>
        <dbReference type="ChEBI" id="CHEBI:57743"/>
    </ligand>
</feature>
<feature type="binding site" evidence="1">
    <location>
        <position position="97"/>
    </location>
    <ligand>
        <name>L-citrulline</name>
        <dbReference type="ChEBI" id="CHEBI:57743"/>
    </ligand>
</feature>
<feature type="binding site" evidence="1">
    <location>
        <position position="122"/>
    </location>
    <ligand>
        <name>ATP</name>
        <dbReference type="ChEBI" id="CHEBI:30616"/>
    </ligand>
</feature>
<feature type="binding site" evidence="1">
    <location>
        <position position="124"/>
    </location>
    <ligand>
        <name>L-aspartate</name>
        <dbReference type="ChEBI" id="CHEBI:29991"/>
    </ligand>
</feature>
<feature type="binding site" evidence="1">
    <location>
        <position position="128"/>
    </location>
    <ligand>
        <name>L-aspartate</name>
        <dbReference type="ChEBI" id="CHEBI:29991"/>
    </ligand>
</feature>
<feature type="binding site" evidence="1">
    <location>
        <position position="128"/>
    </location>
    <ligand>
        <name>L-citrulline</name>
        <dbReference type="ChEBI" id="CHEBI:57743"/>
    </ligand>
</feature>
<feature type="binding site" evidence="1">
    <location>
        <position position="129"/>
    </location>
    <ligand>
        <name>L-aspartate</name>
        <dbReference type="ChEBI" id="CHEBI:29991"/>
    </ligand>
</feature>
<feature type="binding site" evidence="1">
    <location>
        <position position="132"/>
    </location>
    <ligand>
        <name>L-citrulline</name>
        <dbReference type="ChEBI" id="CHEBI:57743"/>
    </ligand>
</feature>
<feature type="binding site" evidence="1">
    <location>
        <position position="183"/>
    </location>
    <ligand>
        <name>L-citrulline</name>
        <dbReference type="ChEBI" id="CHEBI:57743"/>
    </ligand>
</feature>
<feature type="binding site" evidence="1">
    <location>
        <position position="192"/>
    </location>
    <ligand>
        <name>L-citrulline</name>
        <dbReference type="ChEBI" id="CHEBI:57743"/>
    </ligand>
</feature>
<feature type="binding site" evidence="1">
    <location>
        <position position="268"/>
    </location>
    <ligand>
        <name>L-citrulline</name>
        <dbReference type="ChEBI" id="CHEBI:57743"/>
    </ligand>
</feature>
<feature type="binding site" evidence="1">
    <location>
        <position position="280"/>
    </location>
    <ligand>
        <name>L-citrulline</name>
        <dbReference type="ChEBI" id="CHEBI:57743"/>
    </ligand>
</feature>
<evidence type="ECO:0000255" key="1">
    <source>
        <dbReference type="HAMAP-Rule" id="MF_00005"/>
    </source>
</evidence>
<keyword id="KW-0028">Amino-acid biosynthesis</keyword>
<keyword id="KW-0055">Arginine biosynthesis</keyword>
<keyword id="KW-0067">ATP-binding</keyword>
<keyword id="KW-0963">Cytoplasm</keyword>
<keyword id="KW-0436">Ligase</keyword>
<keyword id="KW-0547">Nucleotide-binding</keyword>
<keyword id="KW-1185">Reference proteome</keyword>
<proteinExistence type="inferred from homology"/>
<gene>
    <name evidence="1" type="primary">argG</name>
    <name type="ordered locus">Plav_1377</name>
</gene>
<protein>
    <recommendedName>
        <fullName evidence="1">Argininosuccinate synthase</fullName>
        <ecNumber evidence="1">6.3.4.5</ecNumber>
    </recommendedName>
    <alternativeName>
        <fullName evidence="1">Citrulline--aspartate ligase</fullName>
    </alternativeName>
</protein>
<organism>
    <name type="scientific">Parvibaculum lavamentivorans (strain DS-1 / DSM 13023 / NCIMB 13966)</name>
    <dbReference type="NCBI Taxonomy" id="402881"/>
    <lineage>
        <taxon>Bacteria</taxon>
        <taxon>Pseudomonadati</taxon>
        <taxon>Pseudomonadota</taxon>
        <taxon>Alphaproteobacteria</taxon>
        <taxon>Hyphomicrobiales</taxon>
        <taxon>Parvibaculaceae</taxon>
        <taxon>Parvibaculum</taxon>
    </lineage>
</organism>
<comment type="catalytic activity">
    <reaction evidence="1">
        <text>L-citrulline + L-aspartate + ATP = 2-(N(omega)-L-arginino)succinate + AMP + diphosphate + H(+)</text>
        <dbReference type="Rhea" id="RHEA:10932"/>
        <dbReference type="ChEBI" id="CHEBI:15378"/>
        <dbReference type="ChEBI" id="CHEBI:29991"/>
        <dbReference type="ChEBI" id="CHEBI:30616"/>
        <dbReference type="ChEBI" id="CHEBI:33019"/>
        <dbReference type="ChEBI" id="CHEBI:57472"/>
        <dbReference type="ChEBI" id="CHEBI:57743"/>
        <dbReference type="ChEBI" id="CHEBI:456215"/>
        <dbReference type="EC" id="6.3.4.5"/>
    </reaction>
</comment>
<comment type="pathway">
    <text evidence="1">Amino-acid biosynthesis; L-arginine biosynthesis; L-arginine from L-ornithine and carbamoyl phosphate: step 2/3.</text>
</comment>
<comment type="subunit">
    <text evidence="1">Homotetramer.</text>
</comment>
<comment type="subcellular location">
    <subcellularLocation>
        <location evidence="1">Cytoplasm</location>
    </subcellularLocation>
</comment>
<comment type="similarity">
    <text evidence="1">Belongs to the argininosuccinate synthase family. Type 1 subfamily.</text>
</comment>
<reference key="1">
    <citation type="journal article" date="2011" name="Stand. Genomic Sci.">
        <title>Complete genome sequence of Parvibaculum lavamentivorans type strain (DS-1(T)).</title>
        <authorList>
            <person name="Schleheck D."/>
            <person name="Weiss M."/>
            <person name="Pitluck S."/>
            <person name="Bruce D."/>
            <person name="Land M.L."/>
            <person name="Han S."/>
            <person name="Saunders E."/>
            <person name="Tapia R."/>
            <person name="Detter C."/>
            <person name="Brettin T."/>
            <person name="Han J."/>
            <person name="Woyke T."/>
            <person name="Goodwin L."/>
            <person name="Pennacchio L."/>
            <person name="Nolan M."/>
            <person name="Cook A.M."/>
            <person name="Kjelleberg S."/>
            <person name="Thomas T."/>
        </authorList>
    </citation>
    <scope>NUCLEOTIDE SEQUENCE [LARGE SCALE GENOMIC DNA]</scope>
    <source>
        <strain>DS-1 / DSM 13023 / NCIMB 13966</strain>
    </source>
</reference>